<protein>
    <recommendedName>
        <fullName evidence="1">Large ribosomal subunit protein bL17</fullName>
    </recommendedName>
    <alternativeName>
        <fullName evidence="2">50S ribosomal protein L17</fullName>
    </alternativeName>
</protein>
<keyword id="KW-0687">Ribonucleoprotein</keyword>
<keyword id="KW-0689">Ribosomal protein</keyword>
<dbReference type="EMBL" id="CP000964">
    <property type="protein sequence ID" value="ACI10461.1"/>
    <property type="molecule type" value="Genomic_DNA"/>
</dbReference>
<dbReference type="SMR" id="B5XNB7"/>
<dbReference type="KEGG" id="kpe:KPK_0422"/>
<dbReference type="HOGENOM" id="CLU_074407_2_0_6"/>
<dbReference type="Proteomes" id="UP000001734">
    <property type="component" value="Chromosome"/>
</dbReference>
<dbReference type="GO" id="GO:0022625">
    <property type="term" value="C:cytosolic large ribosomal subunit"/>
    <property type="evidence" value="ECO:0007669"/>
    <property type="project" value="TreeGrafter"/>
</dbReference>
<dbReference type="GO" id="GO:0003735">
    <property type="term" value="F:structural constituent of ribosome"/>
    <property type="evidence" value="ECO:0007669"/>
    <property type="project" value="InterPro"/>
</dbReference>
<dbReference type="GO" id="GO:0006412">
    <property type="term" value="P:translation"/>
    <property type="evidence" value="ECO:0007669"/>
    <property type="project" value="UniProtKB-UniRule"/>
</dbReference>
<dbReference type="FunFam" id="3.90.1030.10:FF:000001">
    <property type="entry name" value="50S ribosomal protein L17"/>
    <property type="match status" value="1"/>
</dbReference>
<dbReference type="Gene3D" id="3.90.1030.10">
    <property type="entry name" value="Ribosomal protein L17"/>
    <property type="match status" value="1"/>
</dbReference>
<dbReference type="HAMAP" id="MF_01368">
    <property type="entry name" value="Ribosomal_bL17"/>
    <property type="match status" value="1"/>
</dbReference>
<dbReference type="InterPro" id="IPR000456">
    <property type="entry name" value="Ribosomal_bL17"/>
</dbReference>
<dbReference type="InterPro" id="IPR047859">
    <property type="entry name" value="Ribosomal_bL17_CS"/>
</dbReference>
<dbReference type="InterPro" id="IPR036373">
    <property type="entry name" value="Ribosomal_bL17_sf"/>
</dbReference>
<dbReference type="NCBIfam" id="TIGR00059">
    <property type="entry name" value="L17"/>
    <property type="match status" value="1"/>
</dbReference>
<dbReference type="PANTHER" id="PTHR14413:SF16">
    <property type="entry name" value="LARGE RIBOSOMAL SUBUNIT PROTEIN BL17M"/>
    <property type="match status" value="1"/>
</dbReference>
<dbReference type="PANTHER" id="PTHR14413">
    <property type="entry name" value="RIBOSOMAL PROTEIN L17"/>
    <property type="match status" value="1"/>
</dbReference>
<dbReference type="Pfam" id="PF01196">
    <property type="entry name" value="Ribosomal_L17"/>
    <property type="match status" value="1"/>
</dbReference>
<dbReference type="SUPFAM" id="SSF64263">
    <property type="entry name" value="Prokaryotic ribosomal protein L17"/>
    <property type="match status" value="1"/>
</dbReference>
<dbReference type="PROSITE" id="PS01167">
    <property type="entry name" value="RIBOSOMAL_L17"/>
    <property type="match status" value="1"/>
</dbReference>
<comment type="subunit">
    <text evidence="1">Part of the 50S ribosomal subunit. Contacts protein L32.</text>
</comment>
<comment type="similarity">
    <text evidence="1">Belongs to the bacterial ribosomal protein bL17 family.</text>
</comment>
<feature type="chain" id="PRO_1000144437" description="Large ribosomal subunit protein bL17">
    <location>
        <begin position="1"/>
        <end position="128"/>
    </location>
</feature>
<evidence type="ECO:0000255" key="1">
    <source>
        <dbReference type="HAMAP-Rule" id="MF_01368"/>
    </source>
</evidence>
<evidence type="ECO:0000305" key="2"/>
<reference key="1">
    <citation type="journal article" date="2008" name="PLoS Genet.">
        <title>Complete genome sequence of the N2-fixing broad host range endophyte Klebsiella pneumoniae 342 and virulence predictions verified in mice.</title>
        <authorList>
            <person name="Fouts D.E."/>
            <person name="Tyler H.L."/>
            <person name="DeBoy R.T."/>
            <person name="Daugherty S."/>
            <person name="Ren Q."/>
            <person name="Badger J.H."/>
            <person name="Durkin A.S."/>
            <person name="Huot H."/>
            <person name="Shrivastava S."/>
            <person name="Kothari S."/>
            <person name="Dodson R.J."/>
            <person name="Mohamoud Y."/>
            <person name="Khouri H."/>
            <person name="Roesch L.F.W."/>
            <person name="Krogfelt K.A."/>
            <person name="Struve C."/>
            <person name="Triplett E.W."/>
            <person name="Methe B.A."/>
        </authorList>
    </citation>
    <scope>NUCLEOTIDE SEQUENCE [LARGE SCALE GENOMIC DNA]</scope>
    <source>
        <strain>342</strain>
    </source>
</reference>
<organism>
    <name type="scientific">Klebsiella pneumoniae (strain 342)</name>
    <dbReference type="NCBI Taxonomy" id="507522"/>
    <lineage>
        <taxon>Bacteria</taxon>
        <taxon>Pseudomonadati</taxon>
        <taxon>Pseudomonadota</taxon>
        <taxon>Gammaproteobacteria</taxon>
        <taxon>Enterobacterales</taxon>
        <taxon>Enterobacteriaceae</taxon>
        <taxon>Klebsiella/Raoultella group</taxon>
        <taxon>Klebsiella</taxon>
        <taxon>Klebsiella pneumoniae complex</taxon>
    </lineage>
</organism>
<name>RL17_KLEP3</name>
<sequence>MRHRKSGRQLNRNSSHRQAMFRNMAGSLVRHEIIKTTLPKAKELRRVVEPLITLAKTDSVANRRLAFARTRDNEIVAKLFNELGPRFASRAGGYTRILKCGFRAGDNAPMAYIELVDRAEPKAEAAAE</sequence>
<proteinExistence type="inferred from homology"/>
<accession>B5XNB7</accession>
<gene>
    <name evidence="1" type="primary">rplQ</name>
    <name type="ordered locus">KPK_0422</name>
</gene>